<evidence type="ECO:0000255" key="1">
    <source>
        <dbReference type="HAMAP-Rule" id="MF_00921"/>
    </source>
</evidence>
<gene>
    <name type="ordered locus">SGO_0812</name>
</gene>
<comment type="function">
    <text evidence="1">Bifunctional serine/threonine kinase and phosphorylase involved in the regulation of the pyruvate, phosphate dikinase (PPDK) by catalyzing its phosphorylation/dephosphorylation.</text>
</comment>
<comment type="catalytic activity">
    <reaction evidence="1">
        <text>N(tele)-phospho-L-histidyl/L-threonyl-[pyruvate, phosphate dikinase] + ADP = N(tele)-phospho-L-histidyl/O-phospho-L-threonyl-[pyruvate, phosphate dikinase] + AMP + H(+)</text>
        <dbReference type="Rhea" id="RHEA:43692"/>
        <dbReference type="Rhea" id="RHEA-COMP:10650"/>
        <dbReference type="Rhea" id="RHEA-COMP:10651"/>
        <dbReference type="ChEBI" id="CHEBI:15378"/>
        <dbReference type="ChEBI" id="CHEBI:30013"/>
        <dbReference type="ChEBI" id="CHEBI:61977"/>
        <dbReference type="ChEBI" id="CHEBI:83586"/>
        <dbReference type="ChEBI" id="CHEBI:456215"/>
        <dbReference type="ChEBI" id="CHEBI:456216"/>
        <dbReference type="EC" id="2.7.11.32"/>
    </reaction>
</comment>
<comment type="catalytic activity">
    <reaction evidence="1">
        <text>N(tele)-phospho-L-histidyl/O-phospho-L-threonyl-[pyruvate, phosphate dikinase] + phosphate + H(+) = N(tele)-phospho-L-histidyl/L-threonyl-[pyruvate, phosphate dikinase] + diphosphate</text>
        <dbReference type="Rhea" id="RHEA:43696"/>
        <dbReference type="Rhea" id="RHEA-COMP:10650"/>
        <dbReference type="Rhea" id="RHEA-COMP:10651"/>
        <dbReference type="ChEBI" id="CHEBI:15378"/>
        <dbReference type="ChEBI" id="CHEBI:30013"/>
        <dbReference type="ChEBI" id="CHEBI:33019"/>
        <dbReference type="ChEBI" id="CHEBI:43474"/>
        <dbReference type="ChEBI" id="CHEBI:61977"/>
        <dbReference type="ChEBI" id="CHEBI:83586"/>
        <dbReference type="EC" id="2.7.4.27"/>
    </reaction>
</comment>
<comment type="similarity">
    <text evidence="1">Belongs to the pyruvate, phosphate/water dikinase regulatory protein family. PDRP subfamily.</text>
</comment>
<feature type="chain" id="PRO_1000084480" description="Putative pyruvate, phosphate dikinase regulatory protein">
    <location>
        <begin position="1"/>
        <end position="270"/>
    </location>
</feature>
<feature type="binding site" evidence="1">
    <location>
        <begin position="151"/>
        <end position="158"/>
    </location>
    <ligand>
        <name>ADP</name>
        <dbReference type="ChEBI" id="CHEBI:456216"/>
    </ligand>
</feature>
<name>PDRP_STRGC</name>
<proteinExistence type="inferred from homology"/>
<dbReference type="EC" id="2.7.11.32" evidence="1"/>
<dbReference type="EC" id="2.7.4.27" evidence="1"/>
<dbReference type="EMBL" id="CP000725">
    <property type="protein sequence ID" value="ABV09451.1"/>
    <property type="molecule type" value="Genomic_DNA"/>
</dbReference>
<dbReference type="RefSeq" id="WP_012000271.1">
    <property type="nucleotide sequence ID" value="NC_009785.1"/>
</dbReference>
<dbReference type="SMR" id="A8AWF1"/>
<dbReference type="STRING" id="467705.SGO_0812"/>
<dbReference type="KEGG" id="sgo:SGO_0812"/>
<dbReference type="eggNOG" id="COG1806">
    <property type="taxonomic scope" value="Bacteria"/>
</dbReference>
<dbReference type="HOGENOM" id="CLU_046206_2_1_9"/>
<dbReference type="Proteomes" id="UP000001131">
    <property type="component" value="Chromosome"/>
</dbReference>
<dbReference type="GO" id="GO:0043531">
    <property type="term" value="F:ADP binding"/>
    <property type="evidence" value="ECO:0007669"/>
    <property type="project" value="UniProtKB-UniRule"/>
</dbReference>
<dbReference type="GO" id="GO:0005524">
    <property type="term" value="F:ATP binding"/>
    <property type="evidence" value="ECO:0007669"/>
    <property type="project" value="InterPro"/>
</dbReference>
<dbReference type="GO" id="GO:0016776">
    <property type="term" value="F:phosphotransferase activity, phosphate group as acceptor"/>
    <property type="evidence" value="ECO:0007669"/>
    <property type="project" value="UniProtKB-UniRule"/>
</dbReference>
<dbReference type="GO" id="GO:0004674">
    <property type="term" value="F:protein serine/threonine kinase activity"/>
    <property type="evidence" value="ECO:0007669"/>
    <property type="project" value="UniProtKB-UniRule"/>
</dbReference>
<dbReference type="HAMAP" id="MF_00921">
    <property type="entry name" value="PDRP"/>
    <property type="match status" value="1"/>
</dbReference>
<dbReference type="InterPro" id="IPR005177">
    <property type="entry name" value="Kinase-pyrophosphorylase"/>
</dbReference>
<dbReference type="InterPro" id="IPR026565">
    <property type="entry name" value="PPDK_reg"/>
</dbReference>
<dbReference type="NCBIfam" id="NF003742">
    <property type="entry name" value="PRK05339.1"/>
    <property type="match status" value="1"/>
</dbReference>
<dbReference type="PANTHER" id="PTHR31756">
    <property type="entry name" value="PYRUVATE, PHOSPHATE DIKINASE REGULATORY PROTEIN 1, CHLOROPLASTIC"/>
    <property type="match status" value="1"/>
</dbReference>
<dbReference type="PANTHER" id="PTHR31756:SF3">
    <property type="entry name" value="PYRUVATE, PHOSPHATE DIKINASE REGULATORY PROTEIN 1, CHLOROPLASTIC"/>
    <property type="match status" value="1"/>
</dbReference>
<dbReference type="Pfam" id="PF03618">
    <property type="entry name" value="Kinase-PPPase"/>
    <property type="match status" value="1"/>
</dbReference>
<reference key="1">
    <citation type="journal article" date="2007" name="J. Bacteriol.">
        <title>Genome-wide transcriptional changes in Streptococcus gordonii in response to competence signaling peptide.</title>
        <authorList>
            <person name="Vickerman M.M."/>
            <person name="Iobst S."/>
            <person name="Jesionowski A.M."/>
            <person name="Gill S.R."/>
        </authorList>
    </citation>
    <scope>NUCLEOTIDE SEQUENCE [LARGE SCALE GENOMIC DNA]</scope>
    <source>
        <strain>Challis / ATCC 35105 / BCRC 15272 / CH1 / DL1 / V288</strain>
    </source>
</reference>
<protein>
    <recommendedName>
        <fullName evidence="1">Putative pyruvate, phosphate dikinase regulatory protein</fullName>
        <shortName evidence="1">PPDK regulatory protein</shortName>
        <ecNumber evidence="1">2.7.11.32</ecNumber>
        <ecNumber evidence="1">2.7.4.27</ecNumber>
    </recommendedName>
</protein>
<accession>A8AWF1</accession>
<sequence length="270" mass="30456">MKKEMIVYSVSDSLGGTSQKLLSAVTAQYPDIIFNNSYRFPFINKEEELLDILRDAIKDDALVISTLVDGKLASVAREFSQAHGLSYLDLMHPFFEIIKEKTGTDPIEVPGTLHRLDSEYFNKISAIEFAVKYDDGKAPQGFLDSDIVLLGVSRTSKTPLSIYLANKGYKVSNLPLIPEVPLPQVLEKVDSRRLIGLVCEPEKLAKIRSHRLDSLGLTQETSYTDLEKIYQELDYSKTVFKKYGAQIINMSDKSIEETAFLIEEHLKKLN</sequence>
<keyword id="KW-0418">Kinase</keyword>
<keyword id="KW-0547">Nucleotide-binding</keyword>
<keyword id="KW-1185">Reference proteome</keyword>
<keyword id="KW-0723">Serine/threonine-protein kinase</keyword>
<keyword id="KW-0808">Transferase</keyword>
<organism>
    <name type="scientific">Streptococcus gordonii (strain Challis / ATCC 35105 / BCRC 15272 / CH1 / DL1 / V288)</name>
    <dbReference type="NCBI Taxonomy" id="467705"/>
    <lineage>
        <taxon>Bacteria</taxon>
        <taxon>Bacillati</taxon>
        <taxon>Bacillota</taxon>
        <taxon>Bacilli</taxon>
        <taxon>Lactobacillales</taxon>
        <taxon>Streptococcaceae</taxon>
        <taxon>Streptococcus</taxon>
    </lineage>
</organism>